<dbReference type="EC" id="1.1.1.267" evidence="1"/>
<dbReference type="EMBL" id="AL939124">
    <property type="protein sequence ID" value="CAB91130.1"/>
    <property type="molecule type" value="Genomic_DNA"/>
</dbReference>
<dbReference type="RefSeq" id="NP_629822.1">
    <property type="nucleotide sequence ID" value="NC_003888.3"/>
</dbReference>
<dbReference type="RefSeq" id="WP_003973332.1">
    <property type="nucleotide sequence ID" value="NZ_VNID01000024.1"/>
</dbReference>
<dbReference type="SMR" id="Q9KYS1"/>
<dbReference type="FunCoup" id="Q9KYS1">
    <property type="interactions" value="288"/>
</dbReference>
<dbReference type="STRING" id="100226.gene:17763350"/>
<dbReference type="PaxDb" id="100226-SCO5694"/>
<dbReference type="GeneID" id="91383363"/>
<dbReference type="KEGG" id="sco:SCO5694"/>
<dbReference type="PATRIC" id="fig|100226.15.peg.5783"/>
<dbReference type="eggNOG" id="COG0743">
    <property type="taxonomic scope" value="Bacteria"/>
</dbReference>
<dbReference type="HOGENOM" id="CLU_035714_4_0_11"/>
<dbReference type="InParanoid" id="Q9KYS1"/>
<dbReference type="OrthoDB" id="9806546at2"/>
<dbReference type="PhylomeDB" id="Q9KYS1"/>
<dbReference type="UniPathway" id="UPA00056">
    <property type="reaction ID" value="UER00092"/>
</dbReference>
<dbReference type="Proteomes" id="UP000001973">
    <property type="component" value="Chromosome"/>
</dbReference>
<dbReference type="GO" id="GO:0030604">
    <property type="term" value="F:1-deoxy-D-xylulose-5-phosphate reductoisomerase activity"/>
    <property type="evidence" value="ECO:0000318"/>
    <property type="project" value="GO_Central"/>
</dbReference>
<dbReference type="GO" id="GO:0030145">
    <property type="term" value="F:manganese ion binding"/>
    <property type="evidence" value="ECO:0000318"/>
    <property type="project" value="GO_Central"/>
</dbReference>
<dbReference type="GO" id="GO:0070402">
    <property type="term" value="F:NADPH binding"/>
    <property type="evidence" value="ECO:0000318"/>
    <property type="project" value="GO_Central"/>
</dbReference>
<dbReference type="GO" id="GO:0051484">
    <property type="term" value="P:isopentenyl diphosphate biosynthetic process, methylerythritol 4-phosphate pathway involved in terpenoid biosynthetic process"/>
    <property type="evidence" value="ECO:0000318"/>
    <property type="project" value="GO_Central"/>
</dbReference>
<dbReference type="FunFam" id="1.10.1740.10:FF:000023">
    <property type="entry name" value="1-deoxy-D-xylulose 5-phosphate reductoisomerase"/>
    <property type="match status" value="1"/>
</dbReference>
<dbReference type="FunFam" id="3.40.50.720:FF:000045">
    <property type="entry name" value="1-deoxy-D-xylulose 5-phosphate reductoisomerase"/>
    <property type="match status" value="1"/>
</dbReference>
<dbReference type="Gene3D" id="1.10.1740.10">
    <property type="match status" value="1"/>
</dbReference>
<dbReference type="Gene3D" id="3.40.50.720">
    <property type="entry name" value="NAD(P)-binding Rossmann-like Domain"/>
    <property type="match status" value="1"/>
</dbReference>
<dbReference type="HAMAP" id="MF_00183">
    <property type="entry name" value="DXP_reductoisom"/>
    <property type="match status" value="1"/>
</dbReference>
<dbReference type="InterPro" id="IPR003821">
    <property type="entry name" value="DXP_reductoisomerase"/>
</dbReference>
<dbReference type="InterPro" id="IPR013644">
    <property type="entry name" value="DXP_reductoisomerase_C"/>
</dbReference>
<dbReference type="InterPro" id="IPR013512">
    <property type="entry name" value="DXP_reductoisomerase_N"/>
</dbReference>
<dbReference type="InterPro" id="IPR026877">
    <property type="entry name" value="DXPR_C"/>
</dbReference>
<dbReference type="InterPro" id="IPR036169">
    <property type="entry name" value="DXPR_C_sf"/>
</dbReference>
<dbReference type="InterPro" id="IPR036291">
    <property type="entry name" value="NAD(P)-bd_dom_sf"/>
</dbReference>
<dbReference type="NCBIfam" id="TIGR00243">
    <property type="entry name" value="Dxr"/>
    <property type="match status" value="1"/>
</dbReference>
<dbReference type="PANTHER" id="PTHR30525">
    <property type="entry name" value="1-DEOXY-D-XYLULOSE 5-PHOSPHATE REDUCTOISOMERASE"/>
    <property type="match status" value="1"/>
</dbReference>
<dbReference type="PANTHER" id="PTHR30525:SF0">
    <property type="entry name" value="1-DEOXY-D-XYLULOSE 5-PHOSPHATE REDUCTOISOMERASE, CHLOROPLASTIC"/>
    <property type="match status" value="1"/>
</dbReference>
<dbReference type="Pfam" id="PF08436">
    <property type="entry name" value="DXP_redisom_C"/>
    <property type="match status" value="1"/>
</dbReference>
<dbReference type="Pfam" id="PF02670">
    <property type="entry name" value="DXP_reductoisom"/>
    <property type="match status" value="1"/>
</dbReference>
<dbReference type="Pfam" id="PF13288">
    <property type="entry name" value="DXPR_C"/>
    <property type="match status" value="1"/>
</dbReference>
<dbReference type="PIRSF" id="PIRSF006205">
    <property type="entry name" value="Dxp_reductismrs"/>
    <property type="match status" value="1"/>
</dbReference>
<dbReference type="SUPFAM" id="SSF69055">
    <property type="entry name" value="1-deoxy-D-xylulose-5-phosphate reductoisomerase, C-terminal domain"/>
    <property type="match status" value="1"/>
</dbReference>
<dbReference type="SUPFAM" id="SSF55347">
    <property type="entry name" value="Glyceraldehyde-3-phosphate dehydrogenase-like, C-terminal domain"/>
    <property type="match status" value="1"/>
</dbReference>
<dbReference type="SUPFAM" id="SSF51735">
    <property type="entry name" value="NAD(P)-binding Rossmann-fold domains"/>
    <property type="match status" value="1"/>
</dbReference>
<accession>Q9KYS1</accession>
<evidence type="ECO:0000255" key="1">
    <source>
        <dbReference type="HAMAP-Rule" id="MF_00183"/>
    </source>
</evidence>
<comment type="function">
    <text evidence="1">Catalyzes the NADPH-dependent rearrangement and reduction of 1-deoxy-D-xylulose-5-phosphate (DXP) to 2-C-methyl-D-erythritol 4-phosphate (MEP).</text>
</comment>
<comment type="catalytic activity">
    <reaction evidence="1">
        <text>2-C-methyl-D-erythritol 4-phosphate + NADP(+) = 1-deoxy-D-xylulose 5-phosphate + NADPH + H(+)</text>
        <dbReference type="Rhea" id="RHEA:13717"/>
        <dbReference type="ChEBI" id="CHEBI:15378"/>
        <dbReference type="ChEBI" id="CHEBI:57783"/>
        <dbReference type="ChEBI" id="CHEBI:57792"/>
        <dbReference type="ChEBI" id="CHEBI:58262"/>
        <dbReference type="ChEBI" id="CHEBI:58349"/>
        <dbReference type="EC" id="1.1.1.267"/>
    </reaction>
    <physiologicalReaction direction="right-to-left" evidence="1">
        <dbReference type="Rhea" id="RHEA:13719"/>
    </physiologicalReaction>
</comment>
<comment type="cofactor">
    <cofactor evidence="1">
        <name>Mg(2+)</name>
        <dbReference type="ChEBI" id="CHEBI:18420"/>
    </cofactor>
    <cofactor evidence="1">
        <name>Mn(2+)</name>
        <dbReference type="ChEBI" id="CHEBI:29035"/>
    </cofactor>
</comment>
<comment type="pathway">
    <text evidence="1">Isoprenoid biosynthesis; isopentenyl diphosphate biosynthesis via DXP pathway; isopentenyl diphosphate from 1-deoxy-D-xylulose 5-phosphate: step 1/6.</text>
</comment>
<comment type="similarity">
    <text evidence="1">Belongs to the DXR family.</text>
</comment>
<organism>
    <name type="scientific">Streptomyces coelicolor (strain ATCC BAA-471 / A3(2) / M145)</name>
    <dbReference type="NCBI Taxonomy" id="100226"/>
    <lineage>
        <taxon>Bacteria</taxon>
        <taxon>Bacillati</taxon>
        <taxon>Actinomycetota</taxon>
        <taxon>Actinomycetes</taxon>
        <taxon>Kitasatosporales</taxon>
        <taxon>Streptomycetaceae</taxon>
        <taxon>Streptomyces</taxon>
        <taxon>Streptomyces albidoflavus group</taxon>
    </lineage>
</organism>
<keyword id="KW-0414">Isoprene biosynthesis</keyword>
<keyword id="KW-0464">Manganese</keyword>
<keyword id="KW-0479">Metal-binding</keyword>
<keyword id="KW-0521">NADP</keyword>
<keyword id="KW-0560">Oxidoreductase</keyword>
<keyword id="KW-1185">Reference proteome</keyword>
<name>DXR_STRCO</name>
<sequence>MSDSPAPLADPHLVYDPVAGDGPKDVVVLGSTGSIGTQAIDLVLRNPDRFRVTALSANGGRVALLAEQAYRLKARTVAVAREDVVPALREALTAQYGTGEPLPEILAGPEAATQLAASDCHTVLNGITGSIGLAPTLAALEAGRTLALANKESLIVGGPLVKALAKPGQIIPVDSEHAALFQALAAGTRADVRKLVVTASGGPFRGRTRDELAAVTVEDALAHPTWAMGPVITINSATLVNKGLEVIEAHLLYDIPFDRIEVVVHPQSYVHSMVEYTDGSTLAHATPPDMGGPIAVGLGWPERVPDAAPAFDWSKASTWEFFPLDNEAFPSVDLARHVGQLAGTAPAVFNAANEECVEAFRSGALPFLGIMETVTRVVEEHGTPRTGTSLTVADVLEAETWARARARQLAAQTAEARA</sequence>
<proteinExistence type="inferred from homology"/>
<feature type="chain" id="PRO_0000163715" description="1-deoxy-D-xylulose 5-phosphate reductoisomerase">
    <location>
        <begin position="1"/>
        <end position="418"/>
    </location>
</feature>
<feature type="binding site" evidence="1">
    <location>
        <position position="32"/>
    </location>
    <ligand>
        <name>NADPH</name>
        <dbReference type="ChEBI" id="CHEBI:57783"/>
    </ligand>
</feature>
<feature type="binding site" evidence="1">
    <location>
        <position position="33"/>
    </location>
    <ligand>
        <name>NADPH</name>
        <dbReference type="ChEBI" id="CHEBI:57783"/>
    </ligand>
</feature>
<feature type="binding site" evidence="1">
    <location>
        <position position="34"/>
    </location>
    <ligand>
        <name>NADPH</name>
        <dbReference type="ChEBI" id="CHEBI:57783"/>
    </ligand>
</feature>
<feature type="binding site" evidence="1">
    <location>
        <position position="35"/>
    </location>
    <ligand>
        <name>NADPH</name>
        <dbReference type="ChEBI" id="CHEBI:57783"/>
    </ligand>
</feature>
<feature type="binding site" evidence="1">
    <location>
        <position position="150"/>
    </location>
    <ligand>
        <name>NADPH</name>
        <dbReference type="ChEBI" id="CHEBI:57783"/>
    </ligand>
</feature>
<feature type="binding site" evidence="1">
    <location>
        <position position="151"/>
    </location>
    <ligand>
        <name>1-deoxy-D-xylulose 5-phosphate</name>
        <dbReference type="ChEBI" id="CHEBI:57792"/>
    </ligand>
</feature>
<feature type="binding site" evidence="1">
    <location>
        <position position="152"/>
    </location>
    <ligand>
        <name>NADPH</name>
        <dbReference type="ChEBI" id="CHEBI:57783"/>
    </ligand>
</feature>
<feature type="binding site" evidence="1">
    <location>
        <position position="174"/>
    </location>
    <ligand>
        <name>Mn(2+)</name>
        <dbReference type="ChEBI" id="CHEBI:29035"/>
    </ligand>
</feature>
<feature type="binding site" evidence="1">
    <location>
        <position position="175"/>
    </location>
    <ligand>
        <name>1-deoxy-D-xylulose 5-phosphate</name>
        <dbReference type="ChEBI" id="CHEBI:57792"/>
    </ligand>
</feature>
<feature type="binding site" evidence="1">
    <location>
        <position position="176"/>
    </location>
    <ligand>
        <name>1-deoxy-D-xylulose 5-phosphate</name>
        <dbReference type="ChEBI" id="CHEBI:57792"/>
    </ligand>
</feature>
<feature type="binding site" evidence="1">
    <location>
        <position position="176"/>
    </location>
    <ligand>
        <name>Mn(2+)</name>
        <dbReference type="ChEBI" id="CHEBI:29035"/>
    </ligand>
</feature>
<feature type="binding site" evidence="1">
    <location>
        <position position="200"/>
    </location>
    <ligand>
        <name>1-deoxy-D-xylulose 5-phosphate</name>
        <dbReference type="ChEBI" id="CHEBI:57792"/>
    </ligand>
</feature>
<feature type="binding site" evidence="1">
    <location>
        <position position="223"/>
    </location>
    <ligand>
        <name>1-deoxy-D-xylulose 5-phosphate</name>
        <dbReference type="ChEBI" id="CHEBI:57792"/>
    </ligand>
</feature>
<feature type="binding site" evidence="1">
    <location>
        <position position="229"/>
    </location>
    <ligand>
        <name>NADPH</name>
        <dbReference type="ChEBI" id="CHEBI:57783"/>
    </ligand>
</feature>
<feature type="binding site" evidence="1">
    <location>
        <position position="236"/>
    </location>
    <ligand>
        <name>1-deoxy-D-xylulose 5-phosphate</name>
        <dbReference type="ChEBI" id="CHEBI:57792"/>
    </ligand>
</feature>
<feature type="binding site" evidence="1">
    <location>
        <position position="241"/>
    </location>
    <ligand>
        <name>1-deoxy-D-xylulose 5-phosphate</name>
        <dbReference type="ChEBI" id="CHEBI:57792"/>
    </ligand>
</feature>
<feature type="binding site" evidence="1">
    <location>
        <position position="242"/>
    </location>
    <ligand>
        <name>1-deoxy-D-xylulose 5-phosphate</name>
        <dbReference type="ChEBI" id="CHEBI:57792"/>
    </ligand>
</feature>
<feature type="binding site" evidence="1">
    <location>
        <position position="245"/>
    </location>
    <ligand>
        <name>1-deoxy-D-xylulose 5-phosphate</name>
        <dbReference type="ChEBI" id="CHEBI:57792"/>
    </ligand>
</feature>
<feature type="binding site" evidence="1">
    <location>
        <position position="245"/>
    </location>
    <ligand>
        <name>Mn(2+)</name>
        <dbReference type="ChEBI" id="CHEBI:29035"/>
    </ligand>
</feature>
<protein>
    <recommendedName>
        <fullName evidence="1">1-deoxy-D-xylulose 5-phosphate reductoisomerase</fullName>
        <shortName evidence="1">DXP reductoisomerase</shortName>
        <ecNumber evidence="1">1.1.1.267</ecNumber>
    </recommendedName>
    <alternativeName>
        <fullName evidence="1">1-deoxyxylulose-5-phosphate reductoisomerase</fullName>
    </alternativeName>
    <alternativeName>
        <fullName evidence="1">2-C-methyl-D-erythritol 4-phosphate synthase</fullName>
    </alternativeName>
</protein>
<reference key="1">
    <citation type="journal article" date="2002" name="Nature">
        <title>Complete genome sequence of the model actinomycete Streptomyces coelicolor A3(2).</title>
        <authorList>
            <person name="Bentley S.D."/>
            <person name="Chater K.F."/>
            <person name="Cerdeno-Tarraga A.-M."/>
            <person name="Challis G.L."/>
            <person name="Thomson N.R."/>
            <person name="James K.D."/>
            <person name="Harris D.E."/>
            <person name="Quail M.A."/>
            <person name="Kieser H."/>
            <person name="Harper D."/>
            <person name="Bateman A."/>
            <person name="Brown S."/>
            <person name="Chandra G."/>
            <person name="Chen C.W."/>
            <person name="Collins M."/>
            <person name="Cronin A."/>
            <person name="Fraser A."/>
            <person name="Goble A."/>
            <person name="Hidalgo J."/>
            <person name="Hornsby T."/>
            <person name="Howarth S."/>
            <person name="Huang C.-H."/>
            <person name="Kieser T."/>
            <person name="Larke L."/>
            <person name="Murphy L.D."/>
            <person name="Oliver K."/>
            <person name="O'Neil S."/>
            <person name="Rabbinowitsch E."/>
            <person name="Rajandream M.A."/>
            <person name="Rutherford K.M."/>
            <person name="Rutter S."/>
            <person name="Seeger K."/>
            <person name="Saunders D."/>
            <person name="Sharp S."/>
            <person name="Squares R."/>
            <person name="Squares S."/>
            <person name="Taylor K."/>
            <person name="Warren T."/>
            <person name="Wietzorrek A."/>
            <person name="Woodward J.R."/>
            <person name="Barrell B.G."/>
            <person name="Parkhill J."/>
            <person name="Hopwood D.A."/>
        </authorList>
    </citation>
    <scope>NUCLEOTIDE SEQUENCE [LARGE SCALE GENOMIC DNA]</scope>
    <source>
        <strain>ATCC BAA-471 / A3(2) / M145</strain>
    </source>
</reference>
<gene>
    <name evidence="1" type="primary">dxr</name>
    <name type="ordered locus">SCO5694</name>
    <name type="ORF">SC5H4.18</name>
</gene>